<organism>
    <name type="scientific">Paracoccus denitrificans (strain Pd 1222)</name>
    <dbReference type="NCBI Taxonomy" id="318586"/>
    <lineage>
        <taxon>Bacteria</taxon>
        <taxon>Pseudomonadati</taxon>
        <taxon>Pseudomonadota</taxon>
        <taxon>Alphaproteobacteria</taxon>
        <taxon>Rhodobacterales</taxon>
        <taxon>Paracoccaceae</taxon>
        <taxon>Paracoccus</taxon>
    </lineage>
</organism>
<feature type="chain" id="PRO_1000145297" description="ATP synthase subunit a">
    <location>
        <begin position="1"/>
        <end position="248"/>
    </location>
</feature>
<feature type="transmembrane region" description="Helical" evidence="1">
    <location>
        <begin position="34"/>
        <end position="54"/>
    </location>
</feature>
<feature type="transmembrane region" description="Helical" evidence="1">
    <location>
        <begin position="91"/>
        <end position="111"/>
    </location>
</feature>
<feature type="transmembrane region" description="Helical" evidence="1">
    <location>
        <begin position="121"/>
        <end position="141"/>
    </location>
</feature>
<feature type="transmembrane region" description="Helical" evidence="1">
    <location>
        <begin position="147"/>
        <end position="167"/>
    </location>
</feature>
<feature type="transmembrane region" description="Helical" evidence="1">
    <location>
        <begin position="196"/>
        <end position="216"/>
    </location>
</feature>
<feature type="transmembrane region" description="Helical" evidence="1">
    <location>
        <begin position="220"/>
        <end position="240"/>
    </location>
</feature>
<reference key="1">
    <citation type="submission" date="2006-12" db="EMBL/GenBank/DDBJ databases">
        <title>Complete sequence of chromosome 2 of Paracoccus denitrificans PD1222.</title>
        <authorList>
            <person name="Copeland A."/>
            <person name="Lucas S."/>
            <person name="Lapidus A."/>
            <person name="Barry K."/>
            <person name="Detter J.C."/>
            <person name="Glavina del Rio T."/>
            <person name="Hammon N."/>
            <person name="Israni S."/>
            <person name="Dalin E."/>
            <person name="Tice H."/>
            <person name="Pitluck S."/>
            <person name="Munk A.C."/>
            <person name="Brettin T."/>
            <person name="Bruce D."/>
            <person name="Han C."/>
            <person name="Tapia R."/>
            <person name="Gilna P."/>
            <person name="Schmutz J."/>
            <person name="Larimer F."/>
            <person name="Land M."/>
            <person name="Hauser L."/>
            <person name="Kyrpides N."/>
            <person name="Lykidis A."/>
            <person name="Spiro S."/>
            <person name="Richardson D.J."/>
            <person name="Moir J.W.B."/>
            <person name="Ferguson S.J."/>
            <person name="van Spanning R.J.M."/>
            <person name="Richardson P."/>
        </authorList>
    </citation>
    <scope>NUCLEOTIDE SEQUENCE [LARGE SCALE GENOMIC DNA]</scope>
    <source>
        <strain>Pd 1222</strain>
    </source>
</reference>
<gene>
    <name evidence="1" type="primary">atpB</name>
    <name type="ordered locus">Pden_2879</name>
</gene>
<protein>
    <recommendedName>
        <fullName evidence="1">ATP synthase subunit a</fullName>
    </recommendedName>
    <alternativeName>
        <fullName evidence="1">ATP synthase F0 sector subunit a</fullName>
    </alternativeName>
    <alternativeName>
        <fullName evidence="1">F-ATPase subunit 6</fullName>
    </alternativeName>
</protein>
<proteinExistence type="evidence at protein level"/>
<dbReference type="EMBL" id="CP000490">
    <property type="protein sequence ID" value="ABL70963.1"/>
    <property type="molecule type" value="Genomic_DNA"/>
</dbReference>
<dbReference type="RefSeq" id="WP_011749153.1">
    <property type="nucleotide sequence ID" value="NC_008687.1"/>
</dbReference>
<dbReference type="PDB" id="5DN6">
    <property type="method" value="X-ray"/>
    <property type="resolution" value="3.98 A"/>
    <property type="chains" value="X=1-248"/>
</dbReference>
<dbReference type="PDBsum" id="5DN6"/>
<dbReference type="SMR" id="A1B619"/>
<dbReference type="STRING" id="318586.Pden_2879"/>
<dbReference type="TCDB" id="3.A.2.1.7">
    <property type="family name" value="the h+- or na+-translocating f-type, v-type and a-type atpase (f-atpase) superfamily"/>
</dbReference>
<dbReference type="EnsemblBacteria" id="ABL70963">
    <property type="protein sequence ID" value="ABL70963"/>
    <property type="gene ID" value="Pden_2879"/>
</dbReference>
<dbReference type="GeneID" id="93452559"/>
<dbReference type="KEGG" id="pde:Pden_2879"/>
<dbReference type="eggNOG" id="COG0356">
    <property type="taxonomic scope" value="Bacteria"/>
</dbReference>
<dbReference type="HOGENOM" id="CLU_041018_0_2_5"/>
<dbReference type="OrthoDB" id="9809130at2"/>
<dbReference type="Proteomes" id="UP000000361">
    <property type="component" value="Chromosome 2"/>
</dbReference>
<dbReference type="GO" id="GO:0005886">
    <property type="term" value="C:plasma membrane"/>
    <property type="evidence" value="ECO:0007669"/>
    <property type="project" value="UniProtKB-SubCell"/>
</dbReference>
<dbReference type="GO" id="GO:0045259">
    <property type="term" value="C:proton-transporting ATP synthase complex"/>
    <property type="evidence" value="ECO:0007669"/>
    <property type="project" value="UniProtKB-KW"/>
</dbReference>
<dbReference type="GO" id="GO:0046933">
    <property type="term" value="F:proton-transporting ATP synthase activity, rotational mechanism"/>
    <property type="evidence" value="ECO:0007669"/>
    <property type="project" value="UniProtKB-UniRule"/>
</dbReference>
<dbReference type="CDD" id="cd00310">
    <property type="entry name" value="ATP-synt_Fo_a_6"/>
    <property type="match status" value="1"/>
</dbReference>
<dbReference type="Gene3D" id="1.20.120.220">
    <property type="entry name" value="ATP synthase, F0 complex, subunit A"/>
    <property type="match status" value="1"/>
</dbReference>
<dbReference type="HAMAP" id="MF_01393">
    <property type="entry name" value="ATP_synth_a_bact"/>
    <property type="match status" value="1"/>
</dbReference>
<dbReference type="InterPro" id="IPR000568">
    <property type="entry name" value="ATP_synth_F0_asu"/>
</dbReference>
<dbReference type="InterPro" id="IPR023011">
    <property type="entry name" value="ATP_synth_F0_asu_AS"/>
</dbReference>
<dbReference type="InterPro" id="IPR045083">
    <property type="entry name" value="ATP_synth_F0_asu_bact/mt"/>
</dbReference>
<dbReference type="InterPro" id="IPR035908">
    <property type="entry name" value="F0_ATP_A_sf"/>
</dbReference>
<dbReference type="NCBIfam" id="TIGR01131">
    <property type="entry name" value="ATP_synt_6_or_A"/>
    <property type="match status" value="1"/>
</dbReference>
<dbReference type="NCBIfam" id="NF004482">
    <property type="entry name" value="PRK05815.2-4"/>
    <property type="match status" value="1"/>
</dbReference>
<dbReference type="PANTHER" id="PTHR11410">
    <property type="entry name" value="ATP SYNTHASE SUBUNIT A"/>
    <property type="match status" value="1"/>
</dbReference>
<dbReference type="PANTHER" id="PTHR11410:SF0">
    <property type="entry name" value="ATP SYNTHASE SUBUNIT A"/>
    <property type="match status" value="1"/>
</dbReference>
<dbReference type="Pfam" id="PF00119">
    <property type="entry name" value="ATP-synt_A"/>
    <property type="match status" value="1"/>
</dbReference>
<dbReference type="PRINTS" id="PR00123">
    <property type="entry name" value="ATPASEA"/>
</dbReference>
<dbReference type="SUPFAM" id="SSF81336">
    <property type="entry name" value="F1F0 ATP synthase subunit A"/>
    <property type="match status" value="1"/>
</dbReference>
<dbReference type="PROSITE" id="PS00449">
    <property type="entry name" value="ATPASE_A"/>
    <property type="match status" value="1"/>
</dbReference>
<keyword id="KW-0002">3D-structure</keyword>
<keyword id="KW-0066">ATP synthesis</keyword>
<keyword id="KW-0997">Cell inner membrane</keyword>
<keyword id="KW-1003">Cell membrane</keyword>
<keyword id="KW-0138">CF(0)</keyword>
<keyword id="KW-0375">Hydrogen ion transport</keyword>
<keyword id="KW-0406">Ion transport</keyword>
<keyword id="KW-0472">Membrane</keyword>
<keyword id="KW-1185">Reference proteome</keyword>
<keyword id="KW-0812">Transmembrane</keyword>
<keyword id="KW-1133">Transmembrane helix</keyword>
<keyword id="KW-0813">Transport</keyword>
<comment type="function">
    <text evidence="1">Key component of the proton channel; it plays a direct role in the translocation of protons across the membrane.</text>
</comment>
<comment type="subunit">
    <text evidence="1">F-type ATPases have 2 components, CF(1) - the catalytic core - and CF(0) - the membrane proton channel. CF(1) has five subunits: alpha(3), beta(3), gamma(1), delta(1), epsilon(1). CF(0) has three main subunits: a(1), b(2) and c(9-12). The alpha and beta chains form an alternating ring which encloses part of the gamma chain. CF(1) is attached to CF(0) by a central stalk formed by the gamma and epsilon chains, while a peripheral stalk is formed by the delta and b chains.</text>
</comment>
<comment type="subcellular location">
    <subcellularLocation>
        <location evidence="1">Cell inner membrane</location>
        <topology evidence="1">Multi-pass membrane protein</topology>
    </subcellularLocation>
</comment>
<comment type="similarity">
    <text evidence="1">Belongs to the ATPase A chain family.</text>
</comment>
<name>ATP6_PARDP</name>
<evidence type="ECO:0000255" key="1">
    <source>
        <dbReference type="HAMAP-Rule" id="MF_01393"/>
    </source>
</evidence>
<sequence length="248" mass="26724">MAEEEAGGLVFHPMDQFVIKPLFGEGPVNWYTPTNATLWMALAALAITALLVFGTRGRAIVPNRVQSIAELLYGMVHKMVEDVTGKDGLKYFPYVMTLFCFILFANFLGLLPKSFSPTSHIAVTAVLAVLVFAGVTVLGFVKNGAHFLGLFWVSSAPLALRPVLAVIELISYFVRPVSHSIRLAGNIMAGHAVIKVFAAFAAVAAIAPVSVVAITAMYGLEVLVCLIQAYVFTILTCVYLKDALHPAH</sequence>
<accession>A1B619</accession>